<reference key="1">
    <citation type="submission" date="2008-06" db="EMBL/GenBank/DDBJ databases">
        <title>Complete sequence of Stenotrophomonas maltophilia R551-3.</title>
        <authorList>
            <consortium name="US DOE Joint Genome Institute"/>
            <person name="Lucas S."/>
            <person name="Copeland A."/>
            <person name="Lapidus A."/>
            <person name="Glavina del Rio T."/>
            <person name="Dalin E."/>
            <person name="Tice H."/>
            <person name="Pitluck S."/>
            <person name="Chain P."/>
            <person name="Malfatti S."/>
            <person name="Shin M."/>
            <person name="Vergez L."/>
            <person name="Lang D."/>
            <person name="Schmutz J."/>
            <person name="Larimer F."/>
            <person name="Land M."/>
            <person name="Hauser L."/>
            <person name="Kyrpides N."/>
            <person name="Mikhailova N."/>
            <person name="Taghavi S."/>
            <person name="Monchy S."/>
            <person name="Newman L."/>
            <person name="Vangronsveld J."/>
            <person name="van der Lelie D."/>
            <person name="Richardson P."/>
        </authorList>
    </citation>
    <scope>NUCLEOTIDE SEQUENCE [LARGE SCALE GENOMIC DNA]</scope>
    <source>
        <strain>R551-3</strain>
    </source>
</reference>
<dbReference type="EMBL" id="CP001111">
    <property type="protein sequence ID" value="ACF53742.1"/>
    <property type="molecule type" value="Genomic_DNA"/>
</dbReference>
<dbReference type="RefSeq" id="WP_012512563.1">
    <property type="nucleotide sequence ID" value="NC_011071.1"/>
</dbReference>
<dbReference type="SMR" id="B4SPG0"/>
<dbReference type="STRING" id="391008.Smal_4043"/>
<dbReference type="KEGG" id="smt:Smal_4043"/>
<dbReference type="eggNOG" id="COG0706">
    <property type="taxonomic scope" value="Bacteria"/>
</dbReference>
<dbReference type="HOGENOM" id="CLU_016535_3_0_6"/>
<dbReference type="OrthoDB" id="9780552at2"/>
<dbReference type="Proteomes" id="UP000001867">
    <property type="component" value="Chromosome"/>
</dbReference>
<dbReference type="GO" id="GO:0005886">
    <property type="term" value="C:plasma membrane"/>
    <property type="evidence" value="ECO:0007669"/>
    <property type="project" value="UniProtKB-SubCell"/>
</dbReference>
<dbReference type="GO" id="GO:0032977">
    <property type="term" value="F:membrane insertase activity"/>
    <property type="evidence" value="ECO:0007669"/>
    <property type="project" value="InterPro"/>
</dbReference>
<dbReference type="GO" id="GO:0051205">
    <property type="term" value="P:protein insertion into membrane"/>
    <property type="evidence" value="ECO:0007669"/>
    <property type="project" value="TreeGrafter"/>
</dbReference>
<dbReference type="GO" id="GO:0015031">
    <property type="term" value="P:protein transport"/>
    <property type="evidence" value="ECO:0007669"/>
    <property type="project" value="UniProtKB-KW"/>
</dbReference>
<dbReference type="CDD" id="cd20070">
    <property type="entry name" value="5TM_YidC_Alb3"/>
    <property type="match status" value="1"/>
</dbReference>
<dbReference type="CDD" id="cd19961">
    <property type="entry name" value="EcYidC-like_peri"/>
    <property type="match status" value="1"/>
</dbReference>
<dbReference type="Gene3D" id="2.70.98.90">
    <property type="match status" value="1"/>
</dbReference>
<dbReference type="HAMAP" id="MF_01810">
    <property type="entry name" value="YidC_type1"/>
    <property type="match status" value="1"/>
</dbReference>
<dbReference type="InterPro" id="IPR019998">
    <property type="entry name" value="Membr_insert_YidC"/>
</dbReference>
<dbReference type="InterPro" id="IPR028053">
    <property type="entry name" value="Membr_insert_YidC_N"/>
</dbReference>
<dbReference type="InterPro" id="IPR001708">
    <property type="entry name" value="YidC/ALB3/OXA1/COX18"/>
</dbReference>
<dbReference type="InterPro" id="IPR028055">
    <property type="entry name" value="YidC/Oxa/ALB_C"/>
</dbReference>
<dbReference type="InterPro" id="IPR047196">
    <property type="entry name" value="YidC_ALB_C"/>
</dbReference>
<dbReference type="InterPro" id="IPR038221">
    <property type="entry name" value="YidC_periplasmic_sf"/>
</dbReference>
<dbReference type="NCBIfam" id="NF002352">
    <property type="entry name" value="PRK01318.1-3"/>
    <property type="match status" value="1"/>
</dbReference>
<dbReference type="NCBIfam" id="NF002353">
    <property type="entry name" value="PRK01318.1-4"/>
    <property type="match status" value="1"/>
</dbReference>
<dbReference type="NCBIfam" id="TIGR03593">
    <property type="entry name" value="yidC_nterm"/>
    <property type="match status" value="1"/>
</dbReference>
<dbReference type="NCBIfam" id="TIGR03592">
    <property type="entry name" value="yidC_oxa1_cterm"/>
    <property type="match status" value="1"/>
</dbReference>
<dbReference type="PANTHER" id="PTHR12428:SF65">
    <property type="entry name" value="CYTOCHROME C OXIDASE ASSEMBLY PROTEIN COX18, MITOCHONDRIAL"/>
    <property type="match status" value="1"/>
</dbReference>
<dbReference type="PANTHER" id="PTHR12428">
    <property type="entry name" value="OXA1"/>
    <property type="match status" value="1"/>
</dbReference>
<dbReference type="Pfam" id="PF02096">
    <property type="entry name" value="60KD_IMP"/>
    <property type="match status" value="1"/>
</dbReference>
<dbReference type="Pfam" id="PF14849">
    <property type="entry name" value="YidC_periplas"/>
    <property type="match status" value="1"/>
</dbReference>
<dbReference type="PRINTS" id="PR00701">
    <property type="entry name" value="60KDINNERMP"/>
</dbReference>
<dbReference type="PRINTS" id="PR01900">
    <property type="entry name" value="YIDCPROTEIN"/>
</dbReference>
<keyword id="KW-0997">Cell inner membrane</keyword>
<keyword id="KW-1003">Cell membrane</keyword>
<keyword id="KW-0143">Chaperone</keyword>
<keyword id="KW-0472">Membrane</keyword>
<keyword id="KW-0653">Protein transport</keyword>
<keyword id="KW-0812">Transmembrane</keyword>
<keyword id="KW-1133">Transmembrane helix</keyword>
<keyword id="KW-0813">Transport</keyword>
<evidence type="ECO:0000255" key="1">
    <source>
        <dbReference type="HAMAP-Rule" id="MF_01810"/>
    </source>
</evidence>
<evidence type="ECO:0000256" key="2">
    <source>
        <dbReference type="SAM" id="MobiDB-lite"/>
    </source>
</evidence>
<proteinExistence type="inferred from homology"/>
<protein>
    <recommendedName>
        <fullName evidence="1">Membrane protein insertase YidC</fullName>
    </recommendedName>
    <alternativeName>
        <fullName evidence="1">Foldase YidC</fullName>
    </alternativeName>
    <alternativeName>
        <fullName evidence="1">Membrane integrase YidC</fullName>
    </alternativeName>
    <alternativeName>
        <fullName evidence="1">Membrane protein YidC</fullName>
    </alternativeName>
</protein>
<accession>B4SPG0</accession>
<feature type="chain" id="PRO_1000187709" description="Membrane protein insertase YidC">
    <location>
        <begin position="1"/>
        <end position="571"/>
    </location>
</feature>
<feature type="transmembrane region" description="Helical" evidence="1">
    <location>
        <begin position="4"/>
        <end position="24"/>
    </location>
</feature>
<feature type="transmembrane region" description="Helical" evidence="1">
    <location>
        <begin position="369"/>
        <end position="389"/>
    </location>
</feature>
<feature type="transmembrane region" description="Helical" evidence="1">
    <location>
        <begin position="440"/>
        <end position="460"/>
    </location>
</feature>
<feature type="transmembrane region" description="Helical" evidence="1">
    <location>
        <begin position="483"/>
        <end position="503"/>
    </location>
</feature>
<feature type="transmembrane region" description="Helical" evidence="1">
    <location>
        <begin position="518"/>
        <end position="538"/>
    </location>
</feature>
<feature type="region of interest" description="Disordered" evidence="2">
    <location>
        <begin position="29"/>
        <end position="76"/>
    </location>
</feature>
<feature type="compositionally biased region" description="Low complexity" evidence="2">
    <location>
        <begin position="34"/>
        <end position="43"/>
    </location>
</feature>
<feature type="compositionally biased region" description="Low complexity" evidence="2">
    <location>
        <begin position="57"/>
        <end position="76"/>
    </location>
</feature>
<comment type="function">
    <text evidence="1">Required for the insertion and/or proper folding and/or complex formation of integral membrane proteins into the membrane. Involved in integration of membrane proteins that insert both dependently and independently of the Sec translocase complex, as well as at least some lipoproteins. Aids folding of multispanning membrane proteins.</text>
</comment>
<comment type="subunit">
    <text evidence="1">Interacts with the Sec translocase complex via SecD. Specifically interacts with transmembrane segments of nascent integral membrane proteins during membrane integration.</text>
</comment>
<comment type="subcellular location">
    <subcellularLocation>
        <location evidence="1">Cell inner membrane</location>
        <topology evidence="1">Multi-pass membrane protein</topology>
    </subcellularLocation>
</comment>
<comment type="similarity">
    <text evidence="1">Belongs to the OXA1/ALB3/YidC family. Type 1 subfamily.</text>
</comment>
<gene>
    <name evidence="1" type="primary">yidC</name>
    <name type="ordered locus">Smal_4043</name>
</gene>
<name>YIDC_STRM5</name>
<organism>
    <name type="scientific">Stenotrophomonas maltophilia (strain R551-3)</name>
    <dbReference type="NCBI Taxonomy" id="391008"/>
    <lineage>
        <taxon>Bacteria</taxon>
        <taxon>Pseudomonadati</taxon>
        <taxon>Pseudomonadota</taxon>
        <taxon>Gammaproteobacteria</taxon>
        <taxon>Lysobacterales</taxon>
        <taxon>Lysobacteraceae</taxon>
        <taxon>Stenotrophomonas</taxon>
        <taxon>Stenotrophomonas maltophilia group</taxon>
    </lineage>
</organism>
<sequence>MNQTRVFLIFAWLMVAVLLWMEWSREKAAPTPAPTTTSAPAAAQSVPGATPGSVPNAQVPGAPGQAAVQAQASATPASQRVTVTTDVLRLVLDGGRVLDAELLQFPQTKDEGSPPVRLLTEDPAHPYSAISGWASEDKNTPVPGADGFKLVGDTKDFVLAKGQNELQIPFVWTADSGVTIKRTLTVSRNEYAVRFKDEVSNTGAAPWNGYVYRTLDRTPTILSRSMTNPDSFSFNGATWYDNDKKYQRRAFKDYLEDGTLNQNITGGWLAMLQHHFFTAWIPQKDQTAHYVLSQVAGRDLIEARGPAFTVAPGQSTSTEARLWVGPKLVNLIAKEDVPGLDRVVDYSRFSMMAVIGQGLFWVLNQVHKLVGNWGWAIVGLVVLLKLVLYPLSATQYKSGAKMRRFQPRIAQLKERYGDDRQKFQTAMMELYKKEKINPMGGCLPILIQMPIFFALYWVLVESVELRQAPWFGWIQDLTARDPYFILPVINVAVMWFTQKLTPAPGMDPMQQKMMQFMPLVFGVMMAFMPSGLVLYWVVNGGLGLLQQWWMTKRHGGEPVPATTAPAPVKKK</sequence>